<proteinExistence type="inferred from homology"/>
<name>MINE_ACIF5</name>
<evidence type="ECO:0000255" key="1">
    <source>
        <dbReference type="HAMAP-Rule" id="MF_00262"/>
    </source>
</evidence>
<organism>
    <name type="scientific">Acidithiobacillus ferrooxidans (strain ATCC 53993 / BNL-5-31)</name>
    <name type="common">Leptospirillum ferrooxidans (ATCC 53993)</name>
    <dbReference type="NCBI Taxonomy" id="380394"/>
    <lineage>
        <taxon>Bacteria</taxon>
        <taxon>Pseudomonadati</taxon>
        <taxon>Pseudomonadota</taxon>
        <taxon>Acidithiobacillia</taxon>
        <taxon>Acidithiobacillales</taxon>
        <taxon>Acidithiobacillaceae</taxon>
        <taxon>Acidithiobacillus</taxon>
    </lineage>
</organism>
<feature type="chain" id="PRO_1000114198" description="Cell division topological specificity factor">
    <location>
        <begin position="1"/>
        <end position="83"/>
    </location>
</feature>
<gene>
    <name evidence="1" type="primary">minE</name>
    <name type="ordered locus">Lferr_0012</name>
</gene>
<sequence>MSFLDYFLGSRKKSANVAKDRLKLILAHERDADGPDFLPALQEELLAVIAKYIPVDKENIKVSMERRGDFEVLELNVLFPDQH</sequence>
<reference key="1">
    <citation type="submission" date="2008-08" db="EMBL/GenBank/DDBJ databases">
        <title>Complete sequence of Acidithiobacillus ferrooxidans ATCC 53993.</title>
        <authorList>
            <person name="Lucas S."/>
            <person name="Copeland A."/>
            <person name="Lapidus A."/>
            <person name="Glavina del Rio T."/>
            <person name="Dalin E."/>
            <person name="Tice H."/>
            <person name="Bruce D."/>
            <person name="Goodwin L."/>
            <person name="Pitluck S."/>
            <person name="Sims D."/>
            <person name="Brettin T."/>
            <person name="Detter J.C."/>
            <person name="Han C."/>
            <person name="Kuske C.R."/>
            <person name="Larimer F."/>
            <person name="Land M."/>
            <person name="Hauser L."/>
            <person name="Kyrpides N."/>
            <person name="Lykidis A."/>
            <person name="Borole A.P."/>
        </authorList>
    </citation>
    <scope>NUCLEOTIDE SEQUENCE [LARGE SCALE GENOMIC DNA]</scope>
    <source>
        <strain>ATCC 53993 / BNL-5-31</strain>
    </source>
</reference>
<accession>B5EJ75</accession>
<keyword id="KW-0131">Cell cycle</keyword>
<keyword id="KW-0132">Cell division</keyword>
<protein>
    <recommendedName>
        <fullName evidence="1">Cell division topological specificity factor</fullName>
    </recommendedName>
</protein>
<comment type="function">
    <text evidence="1">Prevents the cell division inhibition by proteins MinC and MinD at internal division sites while permitting inhibition at polar sites. This ensures cell division at the proper site by restricting the formation of a division septum at the midpoint of the long axis of the cell.</text>
</comment>
<comment type="similarity">
    <text evidence="1">Belongs to the MinE family.</text>
</comment>
<dbReference type="EMBL" id="CP001132">
    <property type="protein sequence ID" value="ACH82274.1"/>
    <property type="molecule type" value="Genomic_DNA"/>
</dbReference>
<dbReference type="RefSeq" id="WP_009562192.1">
    <property type="nucleotide sequence ID" value="NC_011206.1"/>
</dbReference>
<dbReference type="SMR" id="B5EJ75"/>
<dbReference type="GeneID" id="65279412"/>
<dbReference type="KEGG" id="afe:Lferr_0012"/>
<dbReference type="eggNOG" id="COG0851">
    <property type="taxonomic scope" value="Bacteria"/>
</dbReference>
<dbReference type="HOGENOM" id="CLU_137929_2_1_6"/>
<dbReference type="GO" id="GO:0051301">
    <property type="term" value="P:cell division"/>
    <property type="evidence" value="ECO:0007669"/>
    <property type="project" value="UniProtKB-KW"/>
</dbReference>
<dbReference type="GO" id="GO:0032955">
    <property type="term" value="P:regulation of division septum assembly"/>
    <property type="evidence" value="ECO:0007669"/>
    <property type="project" value="InterPro"/>
</dbReference>
<dbReference type="FunFam" id="3.30.1070.10:FF:000001">
    <property type="entry name" value="Cell division topological specificity factor"/>
    <property type="match status" value="1"/>
</dbReference>
<dbReference type="Gene3D" id="3.30.1070.10">
    <property type="entry name" value="Cell division topological specificity factor MinE"/>
    <property type="match status" value="1"/>
</dbReference>
<dbReference type="HAMAP" id="MF_00262">
    <property type="entry name" value="MinE"/>
    <property type="match status" value="1"/>
</dbReference>
<dbReference type="InterPro" id="IPR005527">
    <property type="entry name" value="MinE"/>
</dbReference>
<dbReference type="InterPro" id="IPR036707">
    <property type="entry name" value="MinE_sf"/>
</dbReference>
<dbReference type="NCBIfam" id="TIGR01215">
    <property type="entry name" value="minE"/>
    <property type="match status" value="1"/>
</dbReference>
<dbReference type="NCBIfam" id="NF001422">
    <property type="entry name" value="PRK00296.1"/>
    <property type="match status" value="1"/>
</dbReference>
<dbReference type="NCBIfam" id="NF010595">
    <property type="entry name" value="PRK13989.1"/>
    <property type="match status" value="1"/>
</dbReference>
<dbReference type="Pfam" id="PF03776">
    <property type="entry name" value="MinE"/>
    <property type="match status" value="1"/>
</dbReference>
<dbReference type="SUPFAM" id="SSF55229">
    <property type="entry name" value="Cell division protein MinE topological specificity domain"/>
    <property type="match status" value="1"/>
</dbReference>